<dbReference type="EMBL" id="CP001164">
    <property type="protein sequence ID" value="ACI39010.1"/>
    <property type="molecule type" value="Genomic_DNA"/>
</dbReference>
<dbReference type="RefSeq" id="WP_000027708.1">
    <property type="nucleotide sequence ID" value="NC_011353.1"/>
</dbReference>
<dbReference type="SMR" id="B5YZ28"/>
<dbReference type="GeneID" id="93778047"/>
<dbReference type="KEGG" id="ecf:ECH74115_5341"/>
<dbReference type="HOGENOM" id="CLU_055275_0_0_6"/>
<dbReference type="GO" id="GO:0005829">
    <property type="term" value="C:cytosol"/>
    <property type="evidence" value="ECO:0007669"/>
    <property type="project" value="TreeGrafter"/>
</dbReference>
<dbReference type="GO" id="GO:0008199">
    <property type="term" value="F:ferric iron binding"/>
    <property type="evidence" value="ECO:0007669"/>
    <property type="project" value="TreeGrafter"/>
</dbReference>
<dbReference type="GO" id="GO:0051604">
    <property type="term" value="P:protein maturation"/>
    <property type="evidence" value="ECO:0007669"/>
    <property type="project" value="TreeGrafter"/>
</dbReference>
<dbReference type="CDD" id="cd16341">
    <property type="entry name" value="FdhE"/>
    <property type="match status" value="1"/>
</dbReference>
<dbReference type="FunFam" id="3.90.1670.10:FF:000001">
    <property type="entry name" value="Protein FdhE"/>
    <property type="match status" value="1"/>
</dbReference>
<dbReference type="Gene3D" id="3.90.1670.10">
    <property type="entry name" value="FdhE-like domain"/>
    <property type="match status" value="1"/>
</dbReference>
<dbReference type="HAMAP" id="MF_00611">
    <property type="entry name" value="FdeH"/>
    <property type="match status" value="1"/>
</dbReference>
<dbReference type="InterPro" id="IPR024064">
    <property type="entry name" value="FdhE-like_sf"/>
</dbReference>
<dbReference type="InterPro" id="IPR056796">
    <property type="entry name" value="FdhE_C"/>
</dbReference>
<dbReference type="InterPro" id="IPR056797">
    <property type="entry name" value="FdhE_central"/>
</dbReference>
<dbReference type="InterPro" id="IPR056774">
    <property type="entry name" value="FdhE_N"/>
</dbReference>
<dbReference type="InterPro" id="IPR006452">
    <property type="entry name" value="Formate_DH_accessory"/>
</dbReference>
<dbReference type="NCBIfam" id="TIGR01562">
    <property type="entry name" value="FdhE"/>
    <property type="match status" value="1"/>
</dbReference>
<dbReference type="NCBIfam" id="NF002925">
    <property type="entry name" value="PRK03564.1"/>
    <property type="match status" value="1"/>
</dbReference>
<dbReference type="PANTHER" id="PTHR37689">
    <property type="entry name" value="PROTEIN FDHE"/>
    <property type="match status" value="1"/>
</dbReference>
<dbReference type="PANTHER" id="PTHR37689:SF1">
    <property type="entry name" value="PROTEIN FDHE"/>
    <property type="match status" value="1"/>
</dbReference>
<dbReference type="Pfam" id="PF24860">
    <property type="entry name" value="FdhE_C"/>
    <property type="match status" value="1"/>
</dbReference>
<dbReference type="Pfam" id="PF24859">
    <property type="entry name" value="FdhE_central"/>
    <property type="match status" value="1"/>
</dbReference>
<dbReference type="Pfam" id="PF04216">
    <property type="entry name" value="FdhE_N"/>
    <property type="match status" value="1"/>
</dbReference>
<dbReference type="PIRSF" id="PIRSF018296">
    <property type="entry name" value="Format_dh_formtn"/>
    <property type="match status" value="1"/>
</dbReference>
<dbReference type="SUPFAM" id="SSF144020">
    <property type="entry name" value="FdhE-like"/>
    <property type="match status" value="1"/>
</dbReference>
<evidence type="ECO:0000255" key="1">
    <source>
        <dbReference type="HAMAP-Rule" id="MF_00611"/>
    </source>
</evidence>
<accession>B5YZ28</accession>
<name>FDHE_ECO5E</name>
<feature type="chain" id="PRO_1000130354" description="Protein FdhE">
    <location>
        <begin position="1"/>
        <end position="309"/>
    </location>
</feature>
<comment type="function">
    <text evidence="1">Necessary for formate dehydrogenase activity.</text>
</comment>
<comment type="subcellular location">
    <subcellularLocation>
        <location evidence="1">Cytoplasm</location>
    </subcellularLocation>
</comment>
<comment type="similarity">
    <text evidence="1">Belongs to the FdhE family.</text>
</comment>
<keyword id="KW-0963">Cytoplasm</keyword>
<gene>
    <name evidence="1" type="primary">fdhE</name>
    <name type="ordered locus">ECH74115_5341</name>
</gene>
<proteinExistence type="inferred from homology"/>
<protein>
    <recommendedName>
        <fullName evidence="1">Protein FdhE</fullName>
    </recommendedName>
</protein>
<reference key="1">
    <citation type="journal article" date="2011" name="Proc. Natl. Acad. Sci. U.S.A.">
        <title>Genomic anatomy of Escherichia coli O157:H7 outbreaks.</title>
        <authorList>
            <person name="Eppinger M."/>
            <person name="Mammel M.K."/>
            <person name="Leclerc J.E."/>
            <person name="Ravel J."/>
            <person name="Cebula T.A."/>
        </authorList>
    </citation>
    <scope>NUCLEOTIDE SEQUENCE [LARGE SCALE GENOMIC DNA]</scope>
    <source>
        <strain>EC4115 / EHEC</strain>
    </source>
</reference>
<sequence length="309" mass="34689">MSIRIIPQDELGSSEKRTADMIPPLLFPRLKNLYNRRAERLRELAENNPLGDYLRFAALIAHAQEVVLYDHPLEMDLTARIKEASAQGKPPLDIHVLPRDKHWQKLLMALIAELKPEMSGPALAVIENLEKASTQELEDMASALFASDFSSVSSDKAPFIWAALSLYWAQMANLIPGKARAEYGEQRQYCPVCGSMPVSSMVQIGTTQGLRYLHCNLCETEWHVVRVKCSNCEQSGKLHYWSLDDEQAAIKAESCDDCGTYLKILYQEKEPKVEAVADDLASLVLDARMEQEGYARSSINPFLFPGEGE</sequence>
<organism>
    <name type="scientific">Escherichia coli O157:H7 (strain EC4115 / EHEC)</name>
    <dbReference type="NCBI Taxonomy" id="444450"/>
    <lineage>
        <taxon>Bacteria</taxon>
        <taxon>Pseudomonadati</taxon>
        <taxon>Pseudomonadota</taxon>
        <taxon>Gammaproteobacteria</taxon>
        <taxon>Enterobacterales</taxon>
        <taxon>Enterobacteriaceae</taxon>
        <taxon>Escherichia</taxon>
    </lineage>
</organism>